<protein>
    <recommendedName>
        <fullName>Riboflavin transporter RibU</fullName>
    </recommendedName>
    <alternativeName>
        <fullName>Riboflavin ECF transporter S component RibU</fullName>
    </alternativeName>
</protein>
<comment type="function">
    <text evidence="1">Mediates riboflavin uptake, may also transport FMN and roseoflavin. Probably a riboflavin-binding protein that interacts with the energy-coupling factor (ECF) ABC-transporter complex. Unlike classic ABC transporters this ECF transporter provides the energy necessary to transport a number of different substrates. The substrates themselves are bound by transmembrane, not extracytoplasmic soluble proteins (By similarity).</text>
</comment>
<comment type="subunit">
    <text evidence="1">Forms a stable energy-coupling factor (ECF) transporter complex composed of a membrane-embedded substrate-binding protein (S component), 2 ATP-binding proteins (A component) and 2 transmembrane proteins (T component). May be able to interact with more than 1 S component at a time (By similarity).</text>
</comment>
<comment type="subcellular location">
    <subcellularLocation>
        <location evidence="3">Cell membrane</location>
        <topology evidence="3">Multi-pass membrane protein</topology>
    </subcellularLocation>
</comment>
<comment type="similarity">
    <text evidence="4">Belongs to the prokaryotic riboflavin transporter (P-RFT) (TC 2.A.87) family.</text>
</comment>
<dbReference type="EMBL" id="CP002110">
    <property type="protein sequence ID" value="ADQ77183.1"/>
    <property type="molecule type" value="Genomic_DNA"/>
</dbReference>
<dbReference type="PDB" id="3P5N">
    <property type="method" value="X-ray"/>
    <property type="resolution" value="3.60 A"/>
    <property type="chains" value="A/B=1-189"/>
</dbReference>
<dbReference type="PDBsum" id="3P5N"/>
<dbReference type="SMR" id="E5QVT2"/>
<dbReference type="KEGG" id="suq:HMPREF0772_11721"/>
<dbReference type="PATRIC" id="fig|548473.6.peg.1680"/>
<dbReference type="HOGENOM" id="CLU_086673_2_2_9"/>
<dbReference type="EvolutionaryTrace" id="E5QVT2"/>
<dbReference type="GO" id="GO:0005886">
    <property type="term" value="C:plasma membrane"/>
    <property type="evidence" value="ECO:0007669"/>
    <property type="project" value="UniProtKB-SubCell"/>
</dbReference>
<dbReference type="GO" id="GO:0032217">
    <property type="term" value="F:riboflavin transmembrane transporter activity"/>
    <property type="evidence" value="ECO:0007669"/>
    <property type="project" value="InterPro"/>
</dbReference>
<dbReference type="Gene3D" id="1.10.1760.20">
    <property type="match status" value="1"/>
</dbReference>
<dbReference type="InterPro" id="IPR024529">
    <property type="entry name" value="ECF_trnsprt_substrate-spec"/>
</dbReference>
<dbReference type="InterPro" id="IPR025720">
    <property type="entry name" value="RibU"/>
</dbReference>
<dbReference type="PANTHER" id="PTHR38438">
    <property type="entry name" value="RIBOFLAVIN TRANSPORTER RIBU"/>
    <property type="match status" value="1"/>
</dbReference>
<dbReference type="PANTHER" id="PTHR38438:SF1">
    <property type="entry name" value="RIBOFLAVIN TRANSPORTER RIBU"/>
    <property type="match status" value="1"/>
</dbReference>
<dbReference type="Pfam" id="PF12822">
    <property type="entry name" value="ECF_trnsprt"/>
    <property type="match status" value="1"/>
</dbReference>
<dbReference type="PIRSF" id="PIRSF037778">
    <property type="entry name" value="UCP037778_transp_RibU"/>
    <property type="match status" value="1"/>
</dbReference>
<feature type="chain" id="PRO_0000407286" description="Riboflavin transporter RibU">
    <location>
        <begin position="1"/>
        <end position="189"/>
    </location>
</feature>
<feature type="topological domain" description="Cytoplasmic" evidence="2">
    <location>
        <begin position="1"/>
        <end position="9"/>
    </location>
</feature>
<feature type="transmembrane region" description="Helical" evidence="2">
    <location>
        <begin position="10"/>
        <end position="29"/>
    </location>
</feature>
<feature type="topological domain" description="Periplasmic" evidence="2">
    <location>
        <begin position="30"/>
        <end position="44"/>
    </location>
</feature>
<feature type="intramembrane region" description="Helical" evidence="2">
    <location>
        <begin position="45"/>
        <end position="56"/>
    </location>
</feature>
<feature type="topological domain" description="Cytoplasmic" evidence="2">
    <location>
        <begin position="57"/>
        <end position="58"/>
    </location>
</feature>
<feature type="transmembrane region" description="Helical" evidence="2">
    <location>
        <begin position="59"/>
        <end position="78"/>
    </location>
</feature>
<feature type="topological domain" description="Periplasmic" evidence="2">
    <location>
        <begin position="79"/>
        <end position="82"/>
    </location>
</feature>
<feature type="transmembrane region" description="Helical" evidence="2">
    <location>
        <begin position="83"/>
        <end position="104"/>
    </location>
</feature>
<feature type="topological domain" description="Cytoplasmic" evidence="2">
    <location>
        <begin position="105"/>
        <end position="107"/>
    </location>
</feature>
<feature type="transmembrane region" description="Helical" evidence="2">
    <location>
        <begin position="108"/>
        <end position="132"/>
    </location>
</feature>
<feature type="topological domain" description="Periplasmic" evidence="2">
    <location>
        <begin position="133"/>
        <end position="159"/>
    </location>
</feature>
<feature type="transmembrane region" description="Helical" evidence="2">
    <location>
        <begin position="160"/>
        <end position="182"/>
    </location>
</feature>
<feature type="topological domain" description="Cytoplasmic" evidence="2">
    <location>
        <begin position="183"/>
        <end position="189"/>
    </location>
</feature>
<evidence type="ECO:0000250" key="1"/>
<evidence type="ECO:0000255" key="2"/>
<evidence type="ECO:0000269" key="3">
    <source>
    </source>
</evidence>
<evidence type="ECO:0000305" key="4"/>
<proteinExistence type="evidence at protein level"/>
<organism>
    <name type="scientific">Staphylococcus aureus (strain TCH60)</name>
    <dbReference type="NCBI Taxonomy" id="548473"/>
    <lineage>
        <taxon>Bacteria</taxon>
        <taxon>Bacillati</taxon>
        <taxon>Bacillota</taxon>
        <taxon>Bacilli</taxon>
        <taxon>Bacillales</taxon>
        <taxon>Staphylococcaceae</taxon>
        <taxon>Staphylococcus</taxon>
    </lineage>
</organism>
<sequence>MNGRRKLNMQQNKRLITISMLSAIAFVLTFIKFPIPFLPPYLTLDFSDVPSLLATFTFGPVAGIIVALVKNLLNYLFSMGDPVGPFANFLAGASFLLTAYAIYKNKRSTKSLITGLIIATIVMTIVLSILNYFVLLPLYGMIFNLADIANNLKVIIVSGIIPFNIIKGIVISIVFILLYRRLANFLKRI</sequence>
<accession>E5QVT2</accession>
<gene>
    <name type="primary">ribU</name>
    <name type="ordered locus">HMPREF0772_11721</name>
</gene>
<reference key="1">
    <citation type="submission" date="2010-07" db="EMBL/GenBank/DDBJ databases">
        <title>Complete genome sequence of Staphylococcus aureus strain TCH60.</title>
        <authorList>
            <person name="Qin X."/>
            <person name="Bachman B."/>
            <person name="Battles P."/>
            <person name="Bell A."/>
            <person name="Bess C."/>
            <person name="Bickham C."/>
            <person name="Chaboub L."/>
            <person name="Chen D."/>
            <person name="Coyle M."/>
            <person name="Deiros D.R."/>
            <person name="Dinh H."/>
            <person name="Forbes L."/>
            <person name="Fowler G."/>
            <person name="Francisco L."/>
            <person name="Fu Q."/>
            <person name="Gubbala S."/>
            <person name="Hale W."/>
            <person name="Han Y."/>
            <person name="Hemphill L."/>
            <person name="Highlander S.K."/>
            <person name="Hirani K."/>
            <person name="Hogues M."/>
            <person name="Jackson L."/>
            <person name="Jakkamsetti A."/>
            <person name="Javaid M."/>
            <person name="Jiang H."/>
            <person name="Korchina V."/>
            <person name="Kovar C."/>
            <person name="Lara F."/>
            <person name="Lee S."/>
            <person name="Mata R."/>
            <person name="Mathew T."/>
            <person name="Moen C."/>
            <person name="Morales K."/>
            <person name="Munidasa M."/>
            <person name="Nazareth L."/>
            <person name="Ngo R."/>
            <person name="Nguyen L."/>
            <person name="Okwuonu G."/>
            <person name="Ongeri F."/>
            <person name="Patil S."/>
            <person name="Petrosino J."/>
            <person name="Pham C."/>
            <person name="Pham P."/>
            <person name="Pu L.-L."/>
            <person name="Puazo M."/>
            <person name="Raj R."/>
            <person name="Reid J."/>
            <person name="Rouhana J."/>
            <person name="Saada N."/>
            <person name="Shang Y."/>
            <person name="Simmons D."/>
            <person name="Thornton R."/>
            <person name="Warren J."/>
            <person name="Weissenberger G."/>
            <person name="Zhang J."/>
            <person name="Zhang L."/>
            <person name="Zhou C."/>
            <person name="Zhu D."/>
            <person name="Muzny D."/>
            <person name="Worley K."/>
            <person name="Gibbs R."/>
        </authorList>
    </citation>
    <scope>NUCLEOTIDE SEQUENCE [LARGE SCALE GENOMIC DNA]</scope>
    <source>
        <strain>TCH60</strain>
    </source>
</reference>
<reference key="2">
    <citation type="journal article" date="2010" name="Nature">
        <title>Structure and mechanism of the S component of a bacterial ECF transporter.</title>
        <authorList>
            <person name="Zhang P."/>
            <person name="Wang J."/>
            <person name="Shi Y."/>
        </authorList>
    </citation>
    <scope>X-RAY CRYSTALLOGRAPHY (3.6 ANGSTROMS) IN COMPLEX WITH RIBOFLAVIN</scope>
    <scope>SUBUNIT</scope>
    <scope>SUBCELLULAR LOCATION</scope>
    <scope>TOPOLOGY</scope>
    <source>
        <strain>TCH60</strain>
    </source>
</reference>
<keyword id="KW-0002">3D-structure</keyword>
<keyword id="KW-1003">Cell membrane</keyword>
<keyword id="KW-0472">Membrane</keyword>
<keyword id="KW-0812">Transmembrane</keyword>
<keyword id="KW-1133">Transmembrane helix</keyword>
<keyword id="KW-0813">Transport</keyword>
<name>RIBU_STAAH</name>